<name>GATA_WOLPP</name>
<evidence type="ECO:0000255" key="1">
    <source>
        <dbReference type="HAMAP-Rule" id="MF_00120"/>
    </source>
</evidence>
<sequence length="488" mass="52894">MNELRRLTITEMHDGLRRRNFSAVELVETHINAVENEQLNAFITKTPEIAIKAAKIADEHFLKQKDDIPPLMGIPVGVKDLFCTKGIKTTACSKMLENFIPTYESTVSNLLLKSGAAVLGKLNMDEFAMGSANTNSYFGPVENVWIRKSDGAKVVPGGSSGGSAASVAGFLCAGALGSDTGGSVRQPAAYCGVVGIKPTYGRCSRFGMIAFASSLDQAGVITRSVSDSALMLEIICGYDEKDSTSSKRTVPKFSSFINGDIKGKRIGIPKEYKMDGISDEIVHNWEKVSSNLKENGAEVVDITLPHTKYAIPVYYLICSAETSSNLARYDGVRYGFRVDADTLEEMYSLTRAEGFGKEVKRRILIGSYALSSGHYNEYYEKAQCIRALIRNDFIKAFEKIDYILVPSAPTEAFGLNEKPDPLIMCINDVFTVPASLAGLPAISVPVGLSNAGLPLALQVIGNYYDEAGILNMASVIEQNCGRIVNSLT</sequence>
<feature type="chain" id="PRO_1000095178" description="Glutamyl-tRNA(Gln) amidotransferase subunit A">
    <location>
        <begin position="1"/>
        <end position="488"/>
    </location>
</feature>
<feature type="active site" description="Charge relay system" evidence="1">
    <location>
        <position position="79"/>
    </location>
</feature>
<feature type="active site" description="Charge relay system" evidence="1">
    <location>
        <position position="159"/>
    </location>
</feature>
<feature type="active site" description="Acyl-ester intermediate" evidence="1">
    <location>
        <position position="183"/>
    </location>
</feature>
<dbReference type="EC" id="6.3.5.7" evidence="1"/>
<dbReference type="EMBL" id="AM999887">
    <property type="protein sequence ID" value="CAQ55210.1"/>
    <property type="molecule type" value="Genomic_DNA"/>
</dbReference>
<dbReference type="RefSeq" id="WP_007302476.1">
    <property type="nucleotide sequence ID" value="NC_010981.1"/>
</dbReference>
<dbReference type="SMR" id="B3CMT8"/>
<dbReference type="KEGG" id="wpi:WP1102"/>
<dbReference type="eggNOG" id="COG0154">
    <property type="taxonomic scope" value="Bacteria"/>
</dbReference>
<dbReference type="HOGENOM" id="CLU_009600_0_3_5"/>
<dbReference type="Proteomes" id="UP000008814">
    <property type="component" value="Chromosome"/>
</dbReference>
<dbReference type="GO" id="GO:0030956">
    <property type="term" value="C:glutamyl-tRNA(Gln) amidotransferase complex"/>
    <property type="evidence" value="ECO:0007669"/>
    <property type="project" value="InterPro"/>
</dbReference>
<dbReference type="GO" id="GO:0005524">
    <property type="term" value="F:ATP binding"/>
    <property type="evidence" value="ECO:0007669"/>
    <property type="project" value="UniProtKB-KW"/>
</dbReference>
<dbReference type="GO" id="GO:0050567">
    <property type="term" value="F:glutaminyl-tRNA synthase (glutamine-hydrolyzing) activity"/>
    <property type="evidence" value="ECO:0007669"/>
    <property type="project" value="UniProtKB-UniRule"/>
</dbReference>
<dbReference type="GO" id="GO:0006412">
    <property type="term" value="P:translation"/>
    <property type="evidence" value="ECO:0007669"/>
    <property type="project" value="UniProtKB-UniRule"/>
</dbReference>
<dbReference type="Gene3D" id="3.90.1300.10">
    <property type="entry name" value="Amidase signature (AS) domain"/>
    <property type="match status" value="1"/>
</dbReference>
<dbReference type="HAMAP" id="MF_00120">
    <property type="entry name" value="GatA"/>
    <property type="match status" value="1"/>
</dbReference>
<dbReference type="InterPro" id="IPR000120">
    <property type="entry name" value="Amidase"/>
</dbReference>
<dbReference type="InterPro" id="IPR020556">
    <property type="entry name" value="Amidase_CS"/>
</dbReference>
<dbReference type="InterPro" id="IPR023631">
    <property type="entry name" value="Amidase_dom"/>
</dbReference>
<dbReference type="InterPro" id="IPR036928">
    <property type="entry name" value="AS_sf"/>
</dbReference>
<dbReference type="InterPro" id="IPR004412">
    <property type="entry name" value="GatA"/>
</dbReference>
<dbReference type="NCBIfam" id="TIGR00132">
    <property type="entry name" value="gatA"/>
    <property type="match status" value="1"/>
</dbReference>
<dbReference type="PANTHER" id="PTHR11895:SF151">
    <property type="entry name" value="GLUTAMYL-TRNA(GLN) AMIDOTRANSFERASE SUBUNIT A"/>
    <property type="match status" value="1"/>
</dbReference>
<dbReference type="PANTHER" id="PTHR11895">
    <property type="entry name" value="TRANSAMIDASE"/>
    <property type="match status" value="1"/>
</dbReference>
<dbReference type="Pfam" id="PF01425">
    <property type="entry name" value="Amidase"/>
    <property type="match status" value="1"/>
</dbReference>
<dbReference type="SUPFAM" id="SSF75304">
    <property type="entry name" value="Amidase signature (AS) enzymes"/>
    <property type="match status" value="1"/>
</dbReference>
<dbReference type="PROSITE" id="PS00571">
    <property type="entry name" value="AMIDASES"/>
    <property type="match status" value="1"/>
</dbReference>
<reference key="1">
    <citation type="journal article" date="2008" name="Mol. Biol. Evol.">
        <title>Genome evolution of Wolbachia strain wPip from the Culex pipiens group.</title>
        <authorList>
            <person name="Klasson L."/>
            <person name="Walker T."/>
            <person name="Sebaihia M."/>
            <person name="Sanders M.J."/>
            <person name="Quail M.A."/>
            <person name="Lord A."/>
            <person name="Sanders S."/>
            <person name="Earl J."/>
            <person name="O'Neill S.L."/>
            <person name="Thomson N."/>
            <person name="Sinkins S.P."/>
            <person name="Parkhill J."/>
        </authorList>
    </citation>
    <scope>NUCLEOTIDE SEQUENCE [LARGE SCALE GENOMIC DNA]</scope>
    <source>
        <strain>wPip</strain>
    </source>
</reference>
<accession>B3CMT8</accession>
<comment type="function">
    <text evidence="1">Allows the formation of correctly charged Gln-tRNA(Gln) through the transamidation of misacylated Glu-tRNA(Gln) in organisms which lack glutaminyl-tRNA synthetase. The reaction takes place in the presence of glutamine and ATP through an activated gamma-phospho-Glu-tRNA(Gln).</text>
</comment>
<comment type="catalytic activity">
    <reaction evidence="1">
        <text>L-glutamyl-tRNA(Gln) + L-glutamine + ATP + H2O = L-glutaminyl-tRNA(Gln) + L-glutamate + ADP + phosphate + H(+)</text>
        <dbReference type="Rhea" id="RHEA:17521"/>
        <dbReference type="Rhea" id="RHEA-COMP:9681"/>
        <dbReference type="Rhea" id="RHEA-COMP:9684"/>
        <dbReference type="ChEBI" id="CHEBI:15377"/>
        <dbReference type="ChEBI" id="CHEBI:15378"/>
        <dbReference type="ChEBI" id="CHEBI:29985"/>
        <dbReference type="ChEBI" id="CHEBI:30616"/>
        <dbReference type="ChEBI" id="CHEBI:43474"/>
        <dbReference type="ChEBI" id="CHEBI:58359"/>
        <dbReference type="ChEBI" id="CHEBI:78520"/>
        <dbReference type="ChEBI" id="CHEBI:78521"/>
        <dbReference type="ChEBI" id="CHEBI:456216"/>
        <dbReference type="EC" id="6.3.5.7"/>
    </reaction>
</comment>
<comment type="subunit">
    <text evidence="1">Heterotrimer of A, B and C subunits.</text>
</comment>
<comment type="similarity">
    <text evidence="1">Belongs to the amidase family. GatA subfamily.</text>
</comment>
<protein>
    <recommendedName>
        <fullName evidence="1">Glutamyl-tRNA(Gln) amidotransferase subunit A</fullName>
        <shortName evidence="1">Glu-ADT subunit A</shortName>
        <ecNumber evidence="1">6.3.5.7</ecNumber>
    </recommendedName>
</protein>
<proteinExistence type="inferred from homology"/>
<gene>
    <name evidence="1" type="primary">gatA</name>
    <name type="ordered locus">WP1102</name>
</gene>
<organism>
    <name type="scientific">Wolbachia pipientis subsp. Culex pipiens (strain wPip)</name>
    <dbReference type="NCBI Taxonomy" id="570417"/>
    <lineage>
        <taxon>Bacteria</taxon>
        <taxon>Pseudomonadati</taxon>
        <taxon>Pseudomonadota</taxon>
        <taxon>Alphaproteobacteria</taxon>
        <taxon>Rickettsiales</taxon>
        <taxon>Anaplasmataceae</taxon>
        <taxon>Wolbachieae</taxon>
        <taxon>Wolbachia</taxon>
    </lineage>
</organism>
<keyword id="KW-0067">ATP-binding</keyword>
<keyword id="KW-0436">Ligase</keyword>
<keyword id="KW-0547">Nucleotide-binding</keyword>
<keyword id="KW-0648">Protein biosynthesis</keyword>